<organism>
    <name type="scientific">Streptomyces coelicolor (strain ATCC BAA-471 / A3(2) / M145)</name>
    <dbReference type="NCBI Taxonomy" id="100226"/>
    <lineage>
        <taxon>Bacteria</taxon>
        <taxon>Bacillati</taxon>
        <taxon>Actinomycetota</taxon>
        <taxon>Actinomycetes</taxon>
        <taxon>Kitasatosporales</taxon>
        <taxon>Streptomycetaceae</taxon>
        <taxon>Streptomyces</taxon>
        <taxon>Streptomyces albidoflavus group</taxon>
    </lineage>
</organism>
<reference key="1">
    <citation type="journal article" date="2002" name="Nature">
        <title>Complete genome sequence of the model actinomycete Streptomyces coelicolor A3(2).</title>
        <authorList>
            <person name="Bentley S.D."/>
            <person name="Chater K.F."/>
            <person name="Cerdeno-Tarraga A.-M."/>
            <person name="Challis G.L."/>
            <person name="Thomson N.R."/>
            <person name="James K.D."/>
            <person name="Harris D.E."/>
            <person name="Quail M.A."/>
            <person name="Kieser H."/>
            <person name="Harper D."/>
            <person name="Bateman A."/>
            <person name="Brown S."/>
            <person name="Chandra G."/>
            <person name="Chen C.W."/>
            <person name="Collins M."/>
            <person name="Cronin A."/>
            <person name="Fraser A."/>
            <person name="Goble A."/>
            <person name="Hidalgo J."/>
            <person name="Hornsby T."/>
            <person name="Howarth S."/>
            <person name="Huang C.-H."/>
            <person name="Kieser T."/>
            <person name="Larke L."/>
            <person name="Murphy L.D."/>
            <person name="Oliver K."/>
            <person name="O'Neil S."/>
            <person name="Rabbinowitsch E."/>
            <person name="Rajandream M.A."/>
            <person name="Rutherford K.M."/>
            <person name="Rutter S."/>
            <person name="Seeger K."/>
            <person name="Saunders D."/>
            <person name="Sharp S."/>
            <person name="Squares R."/>
            <person name="Squares S."/>
            <person name="Taylor K."/>
            <person name="Warren T."/>
            <person name="Wietzorrek A."/>
            <person name="Woodward J.R."/>
            <person name="Barrell B.G."/>
            <person name="Parkhill J."/>
            <person name="Hopwood D.A."/>
        </authorList>
    </citation>
    <scope>NUCLEOTIDE SEQUENCE [LARGE SCALE GENOMIC DNA]</scope>
    <source>
        <strain>ATCC BAA-471 / A3(2) / M145</strain>
    </source>
</reference>
<name>ISPH_STRCO</name>
<dbReference type="EC" id="1.17.7.4" evidence="1"/>
<dbReference type="EMBL" id="AL939122">
    <property type="protein sequence ID" value="CAD55221.1"/>
    <property type="molecule type" value="Genomic_DNA"/>
</dbReference>
<dbReference type="RefSeq" id="NP_733653.1">
    <property type="nucleotide sequence ID" value="NC_003888.3"/>
</dbReference>
<dbReference type="RefSeq" id="WP_003973920.1">
    <property type="nucleotide sequence ID" value="NZ_VNID01000008.1"/>
</dbReference>
<dbReference type="SMR" id="Q9FBM1"/>
<dbReference type="FunCoup" id="Q9FBM1">
    <property type="interactions" value="142"/>
</dbReference>
<dbReference type="STRING" id="100226.gene:17762707"/>
<dbReference type="PaxDb" id="100226-SCO5058"/>
<dbReference type="KEGG" id="sco:SCO5058"/>
<dbReference type="PATRIC" id="fig|100226.15.peg.5137"/>
<dbReference type="eggNOG" id="COG0761">
    <property type="taxonomic scope" value="Bacteria"/>
</dbReference>
<dbReference type="HOGENOM" id="CLU_027486_1_0_11"/>
<dbReference type="InParanoid" id="Q9FBM1"/>
<dbReference type="OrthoDB" id="9804068at2"/>
<dbReference type="PhylomeDB" id="Q9FBM1"/>
<dbReference type="UniPathway" id="UPA00056">
    <property type="reaction ID" value="UER00097"/>
</dbReference>
<dbReference type="UniPathway" id="UPA00059">
    <property type="reaction ID" value="UER00105"/>
</dbReference>
<dbReference type="Proteomes" id="UP000001973">
    <property type="component" value="Chromosome"/>
</dbReference>
<dbReference type="GO" id="GO:0005829">
    <property type="term" value="C:cytosol"/>
    <property type="evidence" value="ECO:0000318"/>
    <property type="project" value="GO_Central"/>
</dbReference>
<dbReference type="GO" id="GO:0051539">
    <property type="term" value="F:4 iron, 4 sulfur cluster binding"/>
    <property type="evidence" value="ECO:0007669"/>
    <property type="project" value="UniProtKB-UniRule"/>
</dbReference>
<dbReference type="GO" id="GO:0051745">
    <property type="term" value="F:4-hydroxy-3-methylbut-2-enyl diphosphate reductase activity"/>
    <property type="evidence" value="ECO:0000318"/>
    <property type="project" value="GO_Central"/>
</dbReference>
<dbReference type="GO" id="GO:0046872">
    <property type="term" value="F:metal ion binding"/>
    <property type="evidence" value="ECO:0007669"/>
    <property type="project" value="UniProtKB-KW"/>
</dbReference>
<dbReference type="GO" id="GO:0050992">
    <property type="term" value="P:dimethylallyl diphosphate biosynthetic process"/>
    <property type="evidence" value="ECO:0007669"/>
    <property type="project" value="UniProtKB-UniRule"/>
</dbReference>
<dbReference type="GO" id="GO:0019288">
    <property type="term" value="P:isopentenyl diphosphate biosynthetic process, methylerythritol 4-phosphate pathway"/>
    <property type="evidence" value="ECO:0000318"/>
    <property type="project" value="GO_Central"/>
</dbReference>
<dbReference type="GO" id="GO:0016114">
    <property type="term" value="P:terpenoid biosynthetic process"/>
    <property type="evidence" value="ECO:0007669"/>
    <property type="project" value="UniProtKB-UniRule"/>
</dbReference>
<dbReference type="CDD" id="cd13944">
    <property type="entry name" value="lytB_ispH"/>
    <property type="match status" value="1"/>
</dbReference>
<dbReference type="Gene3D" id="3.40.50.11270">
    <property type="match status" value="1"/>
</dbReference>
<dbReference type="Gene3D" id="3.40.1010.20">
    <property type="entry name" value="4-hydroxy-3-methylbut-2-enyl diphosphate reductase, catalytic domain"/>
    <property type="match status" value="2"/>
</dbReference>
<dbReference type="HAMAP" id="MF_00191">
    <property type="entry name" value="IspH"/>
    <property type="match status" value="1"/>
</dbReference>
<dbReference type="InterPro" id="IPR003451">
    <property type="entry name" value="LytB/IspH"/>
</dbReference>
<dbReference type="NCBIfam" id="TIGR00216">
    <property type="entry name" value="ispH_lytB"/>
    <property type="match status" value="1"/>
</dbReference>
<dbReference type="NCBIfam" id="NF002188">
    <property type="entry name" value="PRK01045.1-2"/>
    <property type="match status" value="1"/>
</dbReference>
<dbReference type="NCBIfam" id="NF002189">
    <property type="entry name" value="PRK01045.1-3"/>
    <property type="match status" value="1"/>
</dbReference>
<dbReference type="NCBIfam" id="NF002190">
    <property type="entry name" value="PRK01045.1-4"/>
    <property type="match status" value="1"/>
</dbReference>
<dbReference type="PANTHER" id="PTHR30426">
    <property type="entry name" value="4-HYDROXY-3-METHYLBUT-2-ENYL DIPHOSPHATE REDUCTASE"/>
    <property type="match status" value="1"/>
</dbReference>
<dbReference type="PANTHER" id="PTHR30426:SF0">
    <property type="entry name" value="4-HYDROXY-3-METHYLBUT-2-ENYL DIPHOSPHATE REDUCTASE"/>
    <property type="match status" value="1"/>
</dbReference>
<dbReference type="Pfam" id="PF02401">
    <property type="entry name" value="LYTB"/>
    <property type="match status" value="1"/>
</dbReference>
<gene>
    <name evidence="1" type="primary">ispH</name>
    <name type="synonym">lytB</name>
    <name type="ordered locus">SCO5058</name>
    <name type="ORF">SCBAC20F6.01</name>
    <name type="ORF">SCK7.31</name>
</gene>
<proteinExistence type="inferred from homology"/>
<protein>
    <recommendedName>
        <fullName evidence="1">4-hydroxy-3-methylbut-2-enyl diphosphate reductase</fullName>
        <shortName evidence="1">HMBPP reductase</shortName>
        <ecNumber evidence="1">1.17.7.4</ecNumber>
    </recommendedName>
</protein>
<keyword id="KW-0004">4Fe-4S</keyword>
<keyword id="KW-0408">Iron</keyword>
<keyword id="KW-0411">Iron-sulfur</keyword>
<keyword id="KW-0414">Isoprene biosynthesis</keyword>
<keyword id="KW-0479">Metal-binding</keyword>
<keyword id="KW-0560">Oxidoreductase</keyword>
<keyword id="KW-1185">Reference proteome</keyword>
<accession>Q9FBM1</accession>
<accession>Q9ADE9</accession>
<sequence>MGAMTASPGRRVLLAAPRGYCAGVDRAVIAVEKALEQYGAPVYVRHEIVHNKYVVQTLEKKGAIFVERTEEVPEGNIVMFSAHGVAPVVHEEAERGKLATIDATCPLVTKVHKEAVRFANDDYDILLIGHEGHEEVIGTSGEAPDHIQLVDGPEDVAKVEVRDPSKVVWLSQTTLSVDETMETVDALKDKFPQLISPPSDDICYATQNRQLAVKQMGAEAELVIVVGSRNSSNSKRLVEVAKQAGSRAAYLVDFADEIDETWLDGVTTVGVTSGASVPDVLVEQVLEWLSRRGFEDVEIVKAAEESIIFSLPKELRRDLREEAASLVAERGGSGTAGA</sequence>
<feature type="chain" id="PRO_0000128875" description="4-hydroxy-3-methylbut-2-enyl diphosphate reductase">
    <location>
        <begin position="1"/>
        <end position="338"/>
    </location>
</feature>
<feature type="active site" description="Proton donor" evidence="1">
    <location>
        <position position="135"/>
    </location>
</feature>
<feature type="binding site" evidence="1">
    <location>
        <position position="21"/>
    </location>
    <ligand>
        <name>[4Fe-4S] cluster</name>
        <dbReference type="ChEBI" id="CHEBI:49883"/>
    </ligand>
</feature>
<feature type="binding site" evidence="1">
    <location>
        <position position="50"/>
    </location>
    <ligand>
        <name>(2E)-4-hydroxy-3-methylbut-2-enyl diphosphate</name>
        <dbReference type="ChEBI" id="CHEBI:128753"/>
    </ligand>
</feature>
<feature type="binding site" evidence="1">
    <location>
        <position position="50"/>
    </location>
    <ligand>
        <name>dimethylallyl diphosphate</name>
        <dbReference type="ChEBI" id="CHEBI:57623"/>
    </ligand>
</feature>
<feature type="binding site" evidence="1">
    <location>
        <position position="50"/>
    </location>
    <ligand>
        <name>isopentenyl diphosphate</name>
        <dbReference type="ChEBI" id="CHEBI:128769"/>
    </ligand>
</feature>
<feature type="binding site" evidence="1">
    <location>
        <position position="83"/>
    </location>
    <ligand>
        <name>(2E)-4-hydroxy-3-methylbut-2-enyl diphosphate</name>
        <dbReference type="ChEBI" id="CHEBI:128753"/>
    </ligand>
</feature>
<feature type="binding site" evidence="1">
    <location>
        <position position="83"/>
    </location>
    <ligand>
        <name>dimethylallyl diphosphate</name>
        <dbReference type="ChEBI" id="CHEBI:57623"/>
    </ligand>
</feature>
<feature type="binding site" evidence="1">
    <location>
        <position position="83"/>
    </location>
    <ligand>
        <name>isopentenyl diphosphate</name>
        <dbReference type="ChEBI" id="CHEBI:128769"/>
    </ligand>
</feature>
<feature type="binding site" evidence="1">
    <location>
        <position position="105"/>
    </location>
    <ligand>
        <name>[4Fe-4S] cluster</name>
        <dbReference type="ChEBI" id="CHEBI:49883"/>
    </ligand>
</feature>
<feature type="binding site" evidence="1">
    <location>
        <position position="133"/>
    </location>
    <ligand>
        <name>(2E)-4-hydroxy-3-methylbut-2-enyl diphosphate</name>
        <dbReference type="ChEBI" id="CHEBI:128753"/>
    </ligand>
</feature>
<feature type="binding site" evidence="1">
    <location>
        <position position="133"/>
    </location>
    <ligand>
        <name>dimethylallyl diphosphate</name>
        <dbReference type="ChEBI" id="CHEBI:57623"/>
    </ligand>
</feature>
<feature type="binding site" evidence="1">
    <location>
        <position position="133"/>
    </location>
    <ligand>
        <name>isopentenyl diphosphate</name>
        <dbReference type="ChEBI" id="CHEBI:128769"/>
    </ligand>
</feature>
<feature type="binding site" evidence="1">
    <location>
        <position position="173"/>
    </location>
    <ligand>
        <name>(2E)-4-hydroxy-3-methylbut-2-enyl diphosphate</name>
        <dbReference type="ChEBI" id="CHEBI:128753"/>
    </ligand>
</feature>
<feature type="binding site" evidence="1">
    <location>
        <position position="203"/>
    </location>
    <ligand>
        <name>[4Fe-4S] cluster</name>
        <dbReference type="ChEBI" id="CHEBI:49883"/>
    </ligand>
</feature>
<feature type="binding site" evidence="1">
    <location>
        <position position="231"/>
    </location>
    <ligand>
        <name>(2E)-4-hydroxy-3-methylbut-2-enyl diphosphate</name>
        <dbReference type="ChEBI" id="CHEBI:128753"/>
    </ligand>
</feature>
<feature type="binding site" evidence="1">
    <location>
        <position position="231"/>
    </location>
    <ligand>
        <name>dimethylallyl diphosphate</name>
        <dbReference type="ChEBI" id="CHEBI:57623"/>
    </ligand>
</feature>
<feature type="binding site" evidence="1">
    <location>
        <position position="231"/>
    </location>
    <ligand>
        <name>isopentenyl diphosphate</name>
        <dbReference type="ChEBI" id="CHEBI:128769"/>
    </ligand>
</feature>
<feature type="binding site" evidence="1">
    <location>
        <position position="232"/>
    </location>
    <ligand>
        <name>(2E)-4-hydroxy-3-methylbut-2-enyl diphosphate</name>
        <dbReference type="ChEBI" id="CHEBI:128753"/>
    </ligand>
</feature>
<feature type="binding site" evidence="1">
    <location>
        <position position="232"/>
    </location>
    <ligand>
        <name>dimethylallyl diphosphate</name>
        <dbReference type="ChEBI" id="CHEBI:57623"/>
    </ligand>
</feature>
<feature type="binding site" evidence="1">
    <location>
        <position position="232"/>
    </location>
    <ligand>
        <name>isopentenyl diphosphate</name>
        <dbReference type="ChEBI" id="CHEBI:128769"/>
    </ligand>
</feature>
<feature type="binding site" evidence="1">
    <location>
        <position position="233"/>
    </location>
    <ligand>
        <name>(2E)-4-hydroxy-3-methylbut-2-enyl diphosphate</name>
        <dbReference type="ChEBI" id="CHEBI:128753"/>
    </ligand>
</feature>
<feature type="binding site" evidence="1">
    <location>
        <position position="233"/>
    </location>
    <ligand>
        <name>dimethylallyl diphosphate</name>
        <dbReference type="ChEBI" id="CHEBI:57623"/>
    </ligand>
</feature>
<feature type="binding site" evidence="1">
    <location>
        <position position="233"/>
    </location>
    <ligand>
        <name>isopentenyl diphosphate</name>
        <dbReference type="ChEBI" id="CHEBI:128769"/>
    </ligand>
</feature>
<feature type="binding site" evidence="1">
    <location>
        <position position="276"/>
    </location>
    <ligand>
        <name>(2E)-4-hydroxy-3-methylbut-2-enyl diphosphate</name>
        <dbReference type="ChEBI" id="CHEBI:128753"/>
    </ligand>
</feature>
<feature type="binding site" evidence="1">
    <location>
        <position position="276"/>
    </location>
    <ligand>
        <name>dimethylallyl diphosphate</name>
        <dbReference type="ChEBI" id="CHEBI:57623"/>
    </ligand>
</feature>
<feature type="binding site" evidence="1">
    <location>
        <position position="276"/>
    </location>
    <ligand>
        <name>isopentenyl diphosphate</name>
        <dbReference type="ChEBI" id="CHEBI:128769"/>
    </ligand>
</feature>
<comment type="function">
    <text evidence="1">Catalyzes the conversion of 1-hydroxy-2-methyl-2-(E)-butenyl 4-diphosphate (HMBPP) into a mixture of isopentenyl diphosphate (IPP) and dimethylallyl diphosphate (DMAPP). Acts in the terminal step of the DOXP/MEP pathway for isoprenoid precursor biosynthesis.</text>
</comment>
<comment type="catalytic activity">
    <reaction evidence="1">
        <text>isopentenyl diphosphate + 2 oxidized [2Fe-2S]-[ferredoxin] + H2O = (2E)-4-hydroxy-3-methylbut-2-enyl diphosphate + 2 reduced [2Fe-2S]-[ferredoxin] + 2 H(+)</text>
        <dbReference type="Rhea" id="RHEA:24488"/>
        <dbReference type="Rhea" id="RHEA-COMP:10000"/>
        <dbReference type="Rhea" id="RHEA-COMP:10001"/>
        <dbReference type="ChEBI" id="CHEBI:15377"/>
        <dbReference type="ChEBI" id="CHEBI:15378"/>
        <dbReference type="ChEBI" id="CHEBI:33737"/>
        <dbReference type="ChEBI" id="CHEBI:33738"/>
        <dbReference type="ChEBI" id="CHEBI:128753"/>
        <dbReference type="ChEBI" id="CHEBI:128769"/>
        <dbReference type="EC" id="1.17.7.4"/>
    </reaction>
</comment>
<comment type="catalytic activity">
    <reaction evidence="1">
        <text>dimethylallyl diphosphate + 2 oxidized [2Fe-2S]-[ferredoxin] + H2O = (2E)-4-hydroxy-3-methylbut-2-enyl diphosphate + 2 reduced [2Fe-2S]-[ferredoxin] + 2 H(+)</text>
        <dbReference type="Rhea" id="RHEA:24825"/>
        <dbReference type="Rhea" id="RHEA-COMP:10000"/>
        <dbReference type="Rhea" id="RHEA-COMP:10001"/>
        <dbReference type="ChEBI" id="CHEBI:15377"/>
        <dbReference type="ChEBI" id="CHEBI:15378"/>
        <dbReference type="ChEBI" id="CHEBI:33737"/>
        <dbReference type="ChEBI" id="CHEBI:33738"/>
        <dbReference type="ChEBI" id="CHEBI:57623"/>
        <dbReference type="ChEBI" id="CHEBI:128753"/>
        <dbReference type="EC" id="1.17.7.4"/>
    </reaction>
</comment>
<comment type="cofactor">
    <cofactor evidence="1">
        <name>[4Fe-4S] cluster</name>
        <dbReference type="ChEBI" id="CHEBI:49883"/>
    </cofactor>
    <text evidence="1">Binds 1 [4Fe-4S] cluster per subunit.</text>
</comment>
<comment type="pathway">
    <text evidence="1">Isoprenoid biosynthesis; dimethylallyl diphosphate biosynthesis; dimethylallyl diphosphate from (2E)-4-hydroxy-3-methylbutenyl diphosphate: step 1/1.</text>
</comment>
<comment type="pathway">
    <text evidence="1">Isoprenoid biosynthesis; isopentenyl diphosphate biosynthesis via DXP pathway; isopentenyl diphosphate from 1-deoxy-D-xylulose 5-phosphate: step 6/6.</text>
</comment>
<comment type="similarity">
    <text evidence="1">Belongs to the IspH family.</text>
</comment>
<evidence type="ECO:0000255" key="1">
    <source>
        <dbReference type="HAMAP-Rule" id="MF_00191"/>
    </source>
</evidence>